<proteinExistence type="inferred from homology"/>
<sequence length="118" mass="13469">MRNRYIESFEKAQIADKNIPQFKAGDTLRVGVKIQEGDKTRVQNFEGICISVRGTGTGKTFTIRKMGANNVGVERIFPLYSDSLESVTLLRVGRVRRAKLYYLRDRSGKSARIKELRK</sequence>
<dbReference type="EMBL" id="BX571658">
    <property type="protein sequence ID" value="CAE09686.1"/>
    <property type="molecule type" value="Genomic_DNA"/>
</dbReference>
<dbReference type="RefSeq" id="WP_011138486.1">
    <property type="nucleotide sequence ID" value="NC_005090.1"/>
</dbReference>
<dbReference type="SMR" id="Q7MA03"/>
<dbReference type="STRING" id="273121.WS0552"/>
<dbReference type="KEGG" id="wsu:WS0552"/>
<dbReference type="eggNOG" id="COG0335">
    <property type="taxonomic scope" value="Bacteria"/>
</dbReference>
<dbReference type="HOGENOM" id="CLU_103507_2_2_7"/>
<dbReference type="Proteomes" id="UP000000422">
    <property type="component" value="Chromosome"/>
</dbReference>
<dbReference type="GO" id="GO:0022625">
    <property type="term" value="C:cytosolic large ribosomal subunit"/>
    <property type="evidence" value="ECO:0007669"/>
    <property type="project" value="TreeGrafter"/>
</dbReference>
<dbReference type="GO" id="GO:0003735">
    <property type="term" value="F:structural constituent of ribosome"/>
    <property type="evidence" value="ECO:0007669"/>
    <property type="project" value="InterPro"/>
</dbReference>
<dbReference type="GO" id="GO:0006412">
    <property type="term" value="P:translation"/>
    <property type="evidence" value="ECO:0007669"/>
    <property type="project" value="UniProtKB-UniRule"/>
</dbReference>
<dbReference type="FunFam" id="2.30.30.790:FF:000001">
    <property type="entry name" value="50S ribosomal protein L19"/>
    <property type="match status" value="1"/>
</dbReference>
<dbReference type="Gene3D" id="2.30.30.790">
    <property type="match status" value="1"/>
</dbReference>
<dbReference type="HAMAP" id="MF_00402">
    <property type="entry name" value="Ribosomal_bL19"/>
    <property type="match status" value="1"/>
</dbReference>
<dbReference type="InterPro" id="IPR001857">
    <property type="entry name" value="Ribosomal_bL19"/>
</dbReference>
<dbReference type="InterPro" id="IPR018257">
    <property type="entry name" value="Ribosomal_bL19_CS"/>
</dbReference>
<dbReference type="InterPro" id="IPR038657">
    <property type="entry name" value="Ribosomal_bL19_sf"/>
</dbReference>
<dbReference type="InterPro" id="IPR008991">
    <property type="entry name" value="Translation_prot_SH3-like_sf"/>
</dbReference>
<dbReference type="NCBIfam" id="TIGR01024">
    <property type="entry name" value="rplS_bact"/>
    <property type="match status" value="1"/>
</dbReference>
<dbReference type="PANTHER" id="PTHR15680:SF9">
    <property type="entry name" value="LARGE RIBOSOMAL SUBUNIT PROTEIN BL19M"/>
    <property type="match status" value="1"/>
</dbReference>
<dbReference type="PANTHER" id="PTHR15680">
    <property type="entry name" value="RIBOSOMAL PROTEIN L19"/>
    <property type="match status" value="1"/>
</dbReference>
<dbReference type="Pfam" id="PF01245">
    <property type="entry name" value="Ribosomal_L19"/>
    <property type="match status" value="1"/>
</dbReference>
<dbReference type="PIRSF" id="PIRSF002191">
    <property type="entry name" value="Ribosomal_L19"/>
    <property type="match status" value="1"/>
</dbReference>
<dbReference type="PRINTS" id="PR00061">
    <property type="entry name" value="RIBOSOMALL19"/>
</dbReference>
<dbReference type="SUPFAM" id="SSF50104">
    <property type="entry name" value="Translation proteins SH3-like domain"/>
    <property type="match status" value="1"/>
</dbReference>
<dbReference type="PROSITE" id="PS01015">
    <property type="entry name" value="RIBOSOMAL_L19"/>
    <property type="match status" value="1"/>
</dbReference>
<reference key="1">
    <citation type="journal article" date="2003" name="Proc. Natl. Acad. Sci. U.S.A.">
        <title>Complete genome sequence and analysis of Wolinella succinogenes.</title>
        <authorList>
            <person name="Baar C."/>
            <person name="Eppinger M."/>
            <person name="Raddatz G."/>
            <person name="Simon J."/>
            <person name="Lanz C."/>
            <person name="Klimmek O."/>
            <person name="Nandakumar R."/>
            <person name="Gross R."/>
            <person name="Rosinus A."/>
            <person name="Keller H."/>
            <person name="Jagtap P."/>
            <person name="Linke B."/>
            <person name="Meyer F."/>
            <person name="Lederer H."/>
            <person name="Schuster S.C."/>
        </authorList>
    </citation>
    <scope>NUCLEOTIDE SEQUENCE [LARGE SCALE GENOMIC DNA]</scope>
    <source>
        <strain>ATCC 29543 / DSM 1740 / CCUG 13145 / JCM 31913 / LMG 7466 / NCTC 11488 / FDC 602W</strain>
    </source>
</reference>
<comment type="function">
    <text evidence="1">This protein is located at the 30S-50S ribosomal subunit interface and may play a role in the structure and function of the aminoacyl-tRNA binding site.</text>
</comment>
<comment type="similarity">
    <text evidence="1">Belongs to the bacterial ribosomal protein bL19 family.</text>
</comment>
<organism>
    <name type="scientific">Wolinella succinogenes (strain ATCC 29543 / DSM 1740 / CCUG 13145 / JCM 31913 / LMG 7466 / NCTC 11488 / FDC 602W)</name>
    <name type="common">Vibrio succinogenes</name>
    <dbReference type="NCBI Taxonomy" id="273121"/>
    <lineage>
        <taxon>Bacteria</taxon>
        <taxon>Pseudomonadati</taxon>
        <taxon>Campylobacterota</taxon>
        <taxon>Epsilonproteobacteria</taxon>
        <taxon>Campylobacterales</taxon>
        <taxon>Helicobacteraceae</taxon>
        <taxon>Wolinella</taxon>
    </lineage>
</organism>
<keyword id="KW-1185">Reference proteome</keyword>
<keyword id="KW-0687">Ribonucleoprotein</keyword>
<keyword id="KW-0689">Ribosomal protein</keyword>
<protein>
    <recommendedName>
        <fullName evidence="1">Large ribosomal subunit protein bL19</fullName>
    </recommendedName>
    <alternativeName>
        <fullName evidence="2">50S ribosomal protein L19</fullName>
    </alternativeName>
</protein>
<accession>Q7MA03</accession>
<name>RL19_WOLSU</name>
<feature type="chain" id="PRO_0000163571" description="Large ribosomal subunit protein bL19">
    <location>
        <begin position="1"/>
        <end position="118"/>
    </location>
</feature>
<evidence type="ECO:0000255" key="1">
    <source>
        <dbReference type="HAMAP-Rule" id="MF_00402"/>
    </source>
</evidence>
<evidence type="ECO:0000305" key="2"/>
<gene>
    <name evidence="1" type="primary">rplS</name>
    <name type="ordered locus">WS0552</name>
</gene>